<comment type="function">
    <text evidence="1">This protein specifically catalyzes the removal of signal peptides from prolipoproteins.</text>
</comment>
<comment type="catalytic activity">
    <reaction evidence="1">
        <text>Release of signal peptides from bacterial membrane prolipoproteins. Hydrolyzes -Xaa-Yaa-Zaa-|-(S,diacylglyceryl)Cys-, in which Xaa is hydrophobic (preferably Leu), and Yaa (Ala or Ser) and Zaa (Gly or Ala) have small, neutral side chains.</text>
        <dbReference type="EC" id="3.4.23.36"/>
    </reaction>
</comment>
<comment type="pathway">
    <text evidence="1">Protein modification; lipoprotein biosynthesis (signal peptide cleavage).</text>
</comment>
<comment type="subcellular location">
    <subcellularLocation>
        <location evidence="1">Cell inner membrane</location>
        <topology evidence="1">Multi-pass membrane protein</topology>
    </subcellularLocation>
</comment>
<comment type="similarity">
    <text evidence="1">Belongs to the peptidase A8 family.</text>
</comment>
<proteinExistence type="inferred from homology"/>
<evidence type="ECO:0000255" key="1">
    <source>
        <dbReference type="HAMAP-Rule" id="MF_00161"/>
    </source>
</evidence>
<feature type="chain" id="PRO_1000097240" description="Lipoprotein signal peptidase">
    <location>
        <begin position="1"/>
        <end position="172"/>
    </location>
</feature>
<feature type="transmembrane region" description="Helical" evidence="1">
    <location>
        <begin position="12"/>
        <end position="32"/>
    </location>
</feature>
<feature type="transmembrane region" description="Helical" evidence="1">
    <location>
        <begin position="43"/>
        <end position="63"/>
    </location>
</feature>
<feature type="transmembrane region" description="Helical" evidence="1">
    <location>
        <begin position="77"/>
        <end position="97"/>
    </location>
</feature>
<feature type="transmembrane region" description="Helical" evidence="1">
    <location>
        <begin position="102"/>
        <end position="122"/>
    </location>
</feature>
<feature type="transmembrane region" description="Helical" evidence="1">
    <location>
        <begin position="142"/>
        <end position="162"/>
    </location>
</feature>
<feature type="active site" evidence="1">
    <location>
        <position position="132"/>
    </location>
</feature>
<feature type="active site" evidence="1">
    <location>
        <position position="150"/>
    </location>
</feature>
<protein>
    <recommendedName>
        <fullName evidence="1">Lipoprotein signal peptidase</fullName>
        <ecNumber evidence="1">3.4.23.36</ecNumber>
    </recommendedName>
    <alternativeName>
        <fullName evidence="1">Prolipoprotein signal peptidase</fullName>
    </alternativeName>
    <alternativeName>
        <fullName evidence="1">Signal peptidase II</fullName>
        <shortName evidence="1">SPase II</shortName>
    </alternativeName>
</protein>
<sequence>MARTMSKTAPKTSAANGSLAPWLGVALIVILFDQLTKIAVQKVFAYGVAHEVTSFFNLILVYNRGAAFSFLAMAGGWQRWAFTALGVVAALVICYLLKRHGGQKMFCTALALILGGALGNVIDRLAYGHVIDFLDFHLRTWHWPAFNLADSAITVGAVLLVLDELRRVRGSR</sequence>
<gene>
    <name evidence="1" type="primary">lspA</name>
    <name type="ordered locus">Bphyt_3160</name>
</gene>
<keyword id="KW-0064">Aspartyl protease</keyword>
<keyword id="KW-0997">Cell inner membrane</keyword>
<keyword id="KW-1003">Cell membrane</keyword>
<keyword id="KW-0378">Hydrolase</keyword>
<keyword id="KW-0472">Membrane</keyword>
<keyword id="KW-0645">Protease</keyword>
<keyword id="KW-0812">Transmembrane</keyword>
<keyword id="KW-1133">Transmembrane helix</keyword>
<dbReference type="EC" id="3.4.23.36" evidence="1"/>
<dbReference type="EMBL" id="CP001052">
    <property type="protein sequence ID" value="ACD17552.1"/>
    <property type="molecule type" value="Genomic_DNA"/>
</dbReference>
<dbReference type="RefSeq" id="WP_012434124.1">
    <property type="nucleotide sequence ID" value="NC_010681.1"/>
</dbReference>
<dbReference type="SMR" id="B2T6I8"/>
<dbReference type="STRING" id="398527.Bphyt_3160"/>
<dbReference type="GeneID" id="97308187"/>
<dbReference type="KEGG" id="bpy:Bphyt_3160"/>
<dbReference type="eggNOG" id="COG0597">
    <property type="taxonomic scope" value="Bacteria"/>
</dbReference>
<dbReference type="HOGENOM" id="CLU_083252_4_0_4"/>
<dbReference type="OrthoDB" id="9810259at2"/>
<dbReference type="UniPathway" id="UPA00665"/>
<dbReference type="Proteomes" id="UP000001739">
    <property type="component" value="Chromosome 1"/>
</dbReference>
<dbReference type="GO" id="GO:0005886">
    <property type="term" value="C:plasma membrane"/>
    <property type="evidence" value="ECO:0007669"/>
    <property type="project" value="UniProtKB-SubCell"/>
</dbReference>
<dbReference type="GO" id="GO:0004190">
    <property type="term" value="F:aspartic-type endopeptidase activity"/>
    <property type="evidence" value="ECO:0007669"/>
    <property type="project" value="UniProtKB-UniRule"/>
</dbReference>
<dbReference type="GO" id="GO:0006508">
    <property type="term" value="P:proteolysis"/>
    <property type="evidence" value="ECO:0007669"/>
    <property type="project" value="UniProtKB-KW"/>
</dbReference>
<dbReference type="HAMAP" id="MF_00161">
    <property type="entry name" value="LspA"/>
    <property type="match status" value="1"/>
</dbReference>
<dbReference type="InterPro" id="IPR001872">
    <property type="entry name" value="Peptidase_A8"/>
</dbReference>
<dbReference type="NCBIfam" id="TIGR00077">
    <property type="entry name" value="lspA"/>
    <property type="match status" value="1"/>
</dbReference>
<dbReference type="PANTHER" id="PTHR33695">
    <property type="entry name" value="LIPOPROTEIN SIGNAL PEPTIDASE"/>
    <property type="match status" value="1"/>
</dbReference>
<dbReference type="PANTHER" id="PTHR33695:SF1">
    <property type="entry name" value="LIPOPROTEIN SIGNAL PEPTIDASE"/>
    <property type="match status" value="1"/>
</dbReference>
<dbReference type="Pfam" id="PF01252">
    <property type="entry name" value="Peptidase_A8"/>
    <property type="match status" value="1"/>
</dbReference>
<dbReference type="PRINTS" id="PR00781">
    <property type="entry name" value="LIPOSIGPTASE"/>
</dbReference>
<dbReference type="PROSITE" id="PS00855">
    <property type="entry name" value="SPASE_II"/>
    <property type="match status" value="1"/>
</dbReference>
<organism>
    <name type="scientific">Paraburkholderia phytofirmans (strain DSM 17436 / LMG 22146 / PsJN)</name>
    <name type="common">Burkholderia phytofirmans</name>
    <dbReference type="NCBI Taxonomy" id="398527"/>
    <lineage>
        <taxon>Bacteria</taxon>
        <taxon>Pseudomonadati</taxon>
        <taxon>Pseudomonadota</taxon>
        <taxon>Betaproteobacteria</taxon>
        <taxon>Burkholderiales</taxon>
        <taxon>Burkholderiaceae</taxon>
        <taxon>Paraburkholderia</taxon>
    </lineage>
</organism>
<name>LSPA_PARPJ</name>
<reference key="1">
    <citation type="journal article" date="2011" name="J. Bacteriol.">
        <title>Complete genome sequence of the plant growth-promoting endophyte Burkholderia phytofirmans strain PsJN.</title>
        <authorList>
            <person name="Weilharter A."/>
            <person name="Mitter B."/>
            <person name="Shin M.V."/>
            <person name="Chain P.S."/>
            <person name="Nowak J."/>
            <person name="Sessitsch A."/>
        </authorList>
    </citation>
    <scope>NUCLEOTIDE SEQUENCE [LARGE SCALE GENOMIC DNA]</scope>
    <source>
        <strain>DSM 17436 / LMG 22146 / PsJN</strain>
    </source>
</reference>
<accession>B2T6I8</accession>